<proteinExistence type="inferred from homology"/>
<protein>
    <recommendedName>
        <fullName evidence="1">Macrolide export ATP-binding/permease protein MacB 1</fullName>
        <ecNumber evidence="1">7.6.2.-</ecNumber>
    </recommendedName>
</protein>
<dbReference type="EC" id="7.6.2.-" evidence="1"/>
<dbReference type="EMBL" id="CP000308">
    <property type="protein sequence ID" value="ABG12623.1"/>
    <property type="molecule type" value="Genomic_DNA"/>
</dbReference>
<dbReference type="SMR" id="Q1CA99"/>
<dbReference type="KEGG" id="ypa:YPA_0655"/>
<dbReference type="Proteomes" id="UP000001971">
    <property type="component" value="Chromosome"/>
</dbReference>
<dbReference type="GO" id="GO:0005886">
    <property type="term" value="C:plasma membrane"/>
    <property type="evidence" value="ECO:0007669"/>
    <property type="project" value="UniProtKB-SubCell"/>
</dbReference>
<dbReference type="GO" id="GO:0005524">
    <property type="term" value="F:ATP binding"/>
    <property type="evidence" value="ECO:0007669"/>
    <property type="project" value="UniProtKB-KW"/>
</dbReference>
<dbReference type="GO" id="GO:0016887">
    <property type="term" value="F:ATP hydrolysis activity"/>
    <property type="evidence" value="ECO:0007669"/>
    <property type="project" value="InterPro"/>
</dbReference>
<dbReference type="GO" id="GO:0022857">
    <property type="term" value="F:transmembrane transporter activity"/>
    <property type="evidence" value="ECO:0007669"/>
    <property type="project" value="TreeGrafter"/>
</dbReference>
<dbReference type="GO" id="GO:0046677">
    <property type="term" value="P:response to antibiotic"/>
    <property type="evidence" value="ECO:0007669"/>
    <property type="project" value="UniProtKB-KW"/>
</dbReference>
<dbReference type="CDD" id="cd03255">
    <property type="entry name" value="ABC_MJ0796_LolCDE_FtsE"/>
    <property type="match status" value="1"/>
</dbReference>
<dbReference type="FunFam" id="3.40.50.300:FF:000032">
    <property type="entry name" value="Export ABC transporter ATP-binding protein"/>
    <property type="match status" value="1"/>
</dbReference>
<dbReference type="Gene3D" id="3.40.50.300">
    <property type="entry name" value="P-loop containing nucleotide triphosphate hydrolases"/>
    <property type="match status" value="1"/>
</dbReference>
<dbReference type="InterPro" id="IPR003593">
    <property type="entry name" value="AAA+_ATPase"/>
</dbReference>
<dbReference type="InterPro" id="IPR003838">
    <property type="entry name" value="ABC3_permease_C"/>
</dbReference>
<dbReference type="InterPro" id="IPR003439">
    <property type="entry name" value="ABC_transporter-like_ATP-bd"/>
</dbReference>
<dbReference type="InterPro" id="IPR017871">
    <property type="entry name" value="ABC_transporter-like_CS"/>
</dbReference>
<dbReference type="InterPro" id="IPR017911">
    <property type="entry name" value="MacB-like_ATP-bd"/>
</dbReference>
<dbReference type="InterPro" id="IPR025857">
    <property type="entry name" value="MacB_PCD"/>
</dbReference>
<dbReference type="InterPro" id="IPR050250">
    <property type="entry name" value="Macrolide_Exporter_MacB"/>
</dbReference>
<dbReference type="InterPro" id="IPR027417">
    <property type="entry name" value="P-loop_NTPase"/>
</dbReference>
<dbReference type="NCBIfam" id="NF007826">
    <property type="entry name" value="PRK10535.1"/>
    <property type="match status" value="1"/>
</dbReference>
<dbReference type="PANTHER" id="PTHR30572:SF7">
    <property type="entry name" value="MACROLIDE EXPORT ATP-BINDING_PERMEASE PROTEIN MACB"/>
    <property type="match status" value="1"/>
</dbReference>
<dbReference type="PANTHER" id="PTHR30572">
    <property type="entry name" value="MEMBRANE COMPONENT OF TRANSPORTER-RELATED"/>
    <property type="match status" value="1"/>
</dbReference>
<dbReference type="Pfam" id="PF00005">
    <property type="entry name" value="ABC_tran"/>
    <property type="match status" value="1"/>
</dbReference>
<dbReference type="Pfam" id="PF02687">
    <property type="entry name" value="FtsX"/>
    <property type="match status" value="1"/>
</dbReference>
<dbReference type="Pfam" id="PF12704">
    <property type="entry name" value="MacB_PCD"/>
    <property type="match status" value="1"/>
</dbReference>
<dbReference type="SMART" id="SM00382">
    <property type="entry name" value="AAA"/>
    <property type="match status" value="1"/>
</dbReference>
<dbReference type="SUPFAM" id="SSF52540">
    <property type="entry name" value="P-loop containing nucleoside triphosphate hydrolases"/>
    <property type="match status" value="1"/>
</dbReference>
<dbReference type="PROSITE" id="PS00211">
    <property type="entry name" value="ABC_TRANSPORTER_1"/>
    <property type="match status" value="1"/>
</dbReference>
<dbReference type="PROSITE" id="PS50893">
    <property type="entry name" value="ABC_TRANSPORTER_2"/>
    <property type="match status" value="1"/>
</dbReference>
<dbReference type="PROSITE" id="PS51267">
    <property type="entry name" value="MACB"/>
    <property type="match status" value="1"/>
</dbReference>
<accession>Q1CA99</accession>
<keyword id="KW-0046">Antibiotic resistance</keyword>
<keyword id="KW-0067">ATP-binding</keyword>
<keyword id="KW-0997">Cell inner membrane</keyword>
<keyword id="KW-1003">Cell membrane</keyword>
<keyword id="KW-0472">Membrane</keyword>
<keyword id="KW-0547">Nucleotide-binding</keyword>
<keyword id="KW-1278">Translocase</keyword>
<keyword id="KW-0812">Transmembrane</keyword>
<keyword id="KW-1133">Transmembrane helix</keyword>
<keyword id="KW-0813">Transport</keyword>
<reference key="1">
    <citation type="journal article" date="2006" name="J. Bacteriol.">
        <title>Complete genome sequence of Yersinia pestis strains Antiqua and Nepal516: evidence of gene reduction in an emerging pathogen.</title>
        <authorList>
            <person name="Chain P.S.G."/>
            <person name="Hu P."/>
            <person name="Malfatti S.A."/>
            <person name="Radnedge L."/>
            <person name="Larimer F."/>
            <person name="Vergez L.M."/>
            <person name="Worsham P."/>
            <person name="Chu M.C."/>
            <person name="Andersen G.L."/>
        </authorList>
    </citation>
    <scope>NUCLEOTIDE SEQUENCE [LARGE SCALE GENOMIC DNA]</scope>
    <source>
        <strain>Antiqua</strain>
    </source>
</reference>
<evidence type="ECO:0000255" key="1">
    <source>
        <dbReference type="HAMAP-Rule" id="MF_01720"/>
    </source>
</evidence>
<gene>
    <name evidence="1" type="primary">macB1</name>
    <name type="ordered locus">YPA_0655</name>
</gene>
<organism>
    <name type="scientific">Yersinia pestis bv. Antiqua (strain Antiqua)</name>
    <dbReference type="NCBI Taxonomy" id="360102"/>
    <lineage>
        <taxon>Bacteria</taxon>
        <taxon>Pseudomonadati</taxon>
        <taxon>Pseudomonadota</taxon>
        <taxon>Gammaproteobacteria</taxon>
        <taxon>Enterobacterales</taxon>
        <taxon>Yersiniaceae</taxon>
        <taxon>Yersinia</taxon>
    </lineage>
</organism>
<comment type="function">
    <text evidence="1">Part of the tripartite efflux system MacAB-TolC. MacB is a non-canonical ABC transporter that contains transmembrane domains (TMD), which form a pore in the inner membrane, and an ATP-binding domain (NBD), which is responsible for energy generation. Confers resistance against macrolides.</text>
</comment>
<comment type="subunit">
    <text evidence="1">Homodimer. Part of the tripartite efflux system MacAB-TolC, which is composed of an inner membrane transporter, MacB, a periplasmic membrane fusion protein, MacA, and an outer membrane component, TolC. The complex forms a large protein conduit and can translocate molecules across both the inner and outer membranes. Interacts with MacA.</text>
</comment>
<comment type="subcellular location">
    <subcellularLocation>
        <location evidence="1">Cell inner membrane</location>
        <topology evidence="1">Multi-pass membrane protein</topology>
    </subcellularLocation>
</comment>
<comment type="similarity">
    <text evidence="1">Belongs to the ABC transporter superfamily. Macrolide exporter (TC 3.A.1.122) family.</text>
</comment>
<sequence>MAALLELEGIRRSYQSGEEIVDVLQDVSLTINAGELVAIIGASGSGKSTLMNILGCLDKPSAGIYRVAGQNVDELDDDALAALRREHFGFIFQRYHLLPHLSAAHNVEVPAVYAGLGKHERRERANMLLTRLGLGDRVSYQPNQLSGGQQQRVSIARALMNGGQVILADEPTGALDSHSSVEVMAILKQLQQQGHTVIIVTHDPTVAAQAERVIEIKDGRIMADSGSKNEPVVAAAELMSLTPAAPSWQQLVGRFREALLMAWRAMSANKMRTALTMLGIIIGIASVVSILVVGDAAKQLVLADIRAIGTNTIDIYPGKDFGDDDPSTRQALVHDDMAALKAQSYVSAVSPSIGGSMRLRFGNIDVAASVLGVSDEYFRVFGMAMEQGAPITREQVERQAQTVVIDLNTQRRLFPHMKDVVGQVILVGNMPATVVGVVAEKKSMFGSNKALRVWVPYSTMANRLMGRSYFDSITIRIKEGYSSKEAEQQLVRLLTLRHGKKDIFTYNMDSLLQTAEKTTQTMQLFLTLVAVISLVVGGIGVMNIMLVSVTERTREIGIRMAVGARSSDVMQQFLIEAVLVCLIGGALGISLSFAIGLIVEMFLPNWRIAFPPMALFSAFLCSTVIGVVFGYLPARSAARLNPIDALARE</sequence>
<feature type="chain" id="PRO_0000269988" description="Macrolide export ATP-binding/permease protein MacB 1">
    <location>
        <begin position="1"/>
        <end position="649"/>
    </location>
</feature>
<feature type="transmembrane region" description="Helical" evidence="1">
    <location>
        <begin position="274"/>
        <end position="294"/>
    </location>
</feature>
<feature type="transmembrane region" description="Helical" evidence="1">
    <location>
        <begin position="420"/>
        <end position="440"/>
    </location>
</feature>
<feature type="transmembrane region" description="Helical" evidence="1">
    <location>
        <begin position="524"/>
        <end position="544"/>
    </location>
</feature>
<feature type="transmembrane region" description="Helical" evidence="1">
    <location>
        <begin position="578"/>
        <end position="598"/>
    </location>
</feature>
<feature type="transmembrane region" description="Helical" evidence="1">
    <location>
        <begin position="608"/>
        <end position="628"/>
    </location>
</feature>
<feature type="domain" description="ABC transporter" evidence="1">
    <location>
        <begin position="5"/>
        <end position="243"/>
    </location>
</feature>
<feature type="binding site" evidence="1">
    <location>
        <begin position="41"/>
        <end position="48"/>
    </location>
    <ligand>
        <name>ATP</name>
        <dbReference type="ChEBI" id="CHEBI:30616"/>
    </ligand>
</feature>
<name>MACB1_YERPA</name>